<proteinExistence type="inferred from homology"/>
<organismHost>
    <name type="scientific">Gallus gallus</name>
    <name type="common">Chicken</name>
    <dbReference type="NCBI Taxonomy" id="9031"/>
</organismHost>
<organismHost>
    <name type="scientific">Meleagris gallopavo</name>
    <name type="common">Wild turkey</name>
    <dbReference type="NCBI Taxonomy" id="9103"/>
</organismHost>
<reference key="1">
    <citation type="journal article" date="1993" name="J. Gen. Virol.">
        <title>Identification and sequence analysis of the homologues of the herpes simplex virus type 1 glycoprotein H in Marek's disease virus and the herpesvirus of turkeys.</title>
        <authorList>
            <person name="Scott S.D."/>
            <person name="Smith G.D."/>
            <person name="Ross N.L.J."/>
            <person name="Binns M.M."/>
        </authorList>
    </citation>
    <scope>NUCLEOTIDE SEQUENCE [GENOMIC DNA]</scope>
</reference>
<evidence type="ECO:0000255" key="1"/>
<evidence type="ECO:0000255" key="2">
    <source>
        <dbReference type="HAMAP-Rule" id="MF_04033"/>
    </source>
</evidence>
<name>GH_MEHV1</name>
<organism>
    <name type="scientific">Meleagrid herpesvirus 1</name>
    <name type="common">MeHV-1</name>
    <name type="synonym">Turkey herpesvirus</name>
    <dbReference type="NCBI Taxonomy" id="37108"/>
    <lineage>
        <taxon>Viruses</taxon>
        <taxon>Duplodnaviria</taxon>
        <taxon>Heunggongvirae</taxon>
        <taxon>Peploviricota</taxon>
        <taxon>Herviviricetes</taxon>
        <taxon>Herpesvirales</taxon>
        <taxon>Orthoherpesviridae</taxon>
        <taxon>Alphaherpesvirinae</taxon>
        <taxon>Mardivirus</taxon>
        <taxon>Mardivirus meleagridalpha1</taxon>
    </lineage>
</organism>
<keyword id="KW-1169">Fusion of virus membrane with host cell membrane</keyword>
<keyword id="KW-1168">Fusion of virus membrane with host membrane</keyword>
<keyword id="KW-0325">Glycoprotein</keyword>
<keyword id="KW-1032">Host cell membrane</keyword>
<keyword id="KW-1039">Host endosome</keyword>
<keyword id="KW-1043">Host membrane</keyword>
<keyword id="KW-0472">Membrane</keyword>
<keyword id="KW-0730">Sialic acid</keyword>
<keyword id="KW-0732">Signal</keyword>
<keyword id="KW-0812">Transmembrane</keyword>
<keyword id="KW-1133">Transmembrane helix</keyword>
<keyword id="KW-0261">Viral envelope protein</keyword>
<keyword id="KW-1162">Viral penetration into host cytoplasm</keyword>
<keyword id="KW-0946">Virion</keyword>
<keyword id="KW-1160">Virus entry into host cell</keyword>
<dbReference type="EMBL" id="S62554">
    <property type="protein sequence ID" value="AAB27146.2"/>
    <property type="molecule type" value="Genomic_DNA"/>
</dbReference>
<dbReference type="SMR" id="P36337"/>
<dbReference type="GlyCosmos" id="P36337">
    <property type="glycosylation" value="9 sites, No reported glycans"/>
</dbReference>
<dbReference type="GO" id="GO:0044175">
    <property type="term" value="C:host cell endosome membrane"/>
    <property type="evidence" value="ECO:0007669"/>
    <property type="project" value="UniProtKB-SubCell"/>
</dbReference>
<dbReference type="GO" id="GO:0020002">
    <property type="term" value="C:host cell plasma membrane"/>
    <property type="evidence" value="ECO:0007669"/>
    <property type="project" value="UniProtKB-SubCell"/>
</dbReference>
<dbReference type="GO" id="GO:0016020">
    <property type="term" value="C:membrane"/>
    <property type="evidence" value="ECO:0007669"/>
    <property type="project" value="UniProtKB-KW"/>
</dbReference>
<dbReference type="GO" id="GO:0019031">
    <property type="term" value="C:viral envelope"/>
    <property type="evidence" value="ECO:0007669"/>
    <property type="project" value="UniProtKB-KW"/>
</dbReference>
<dbReference type="GO" id="GO:0055036">
    <property type="term" value="C:virion membrane"/>
    <property type="evidence" value="ECO:0007669"/>
    <property type="project" value="UniProtKB-SubCell"/>
</dbReference>
<dbReference type="GO" id="GO:0019064">
    <property type="term" value="P:fusion of virus membrane with host plasma membrane"/>
    <property type="evidence" value="ECO:0007669"/>
    <property type="project" value="UniProtKB-KW"/>
</dbReference>
<dbReference type="GO" id="GO:0046718">
    <property type="term" value="P:symbiont entry into host cell"/>
    <property type="evidence" value="ECO:0007669"/>
    <property type="project" value="UniProtKB-KW"/>
</dbReference>
<dbReference type="Gene3D" id="1.20.58.1340">
    <property type="match status" value="1"/>
</dbReference>
<dbReference type="Gene3D" id="3.30.500.50">
    <property type="match status" value="1"/>
</dbReference>
<dbReference type="Gene3D" id="2.60.40.3190">
    <property type="entry name" value="Herpesvirus glycoprotein H, C-terminal domain"/>
    <property type="match status" value="1"/>
</dbReference>
<dbReference type="HAMAP" id="MF_04033">
    <property type="entry name" value="HSV_GH"/>
    <property type="match status" value="1"/>
</dbReference>
<dbReference type="InterPro" id="IPR003493">
    <property type="entry name" value="Herpes_gH"/>
</dbReference>
<dbReference type="InterPro" id="IPR035305">
    <property type="entry name" value="Herpes_glycoH_C"/>
</dbReference>
<dbReference type="InterPro" id="IPR038172">
    <property type="entry name" value="Herpes_glycoH_C_sf"/>
</dbReference>
<dbReference type="Pfam" id="PF17488">
    <property type="entry name" value="Herpes_glycoH_C"/>
    <property type="match status" value="1"/>
</dbReference>
<dbReference type="Pfam" id="PF02489">
    <property type="entry name" value="Herpes_glycop_H"/>
    <property type="match status" value="1"/>
</dbReference>
<sequence>MKFYCLIRFMIIANLYSSYQISLPGTYPSQILLDMKNSPLVRFNISTRDYKDETLWIRKNSTFVYIDTAVTTANVIFYLPIGQVRQMVFFKRPISRLLTSNNLVKFINTGSYANHTFKTELSPYLSKTNTPLKKYEIVVDQPTGENPPAGFGSLKPADFLNPGYKFVLTSELVGAYTKRSCFVDPMDSLVPIDYDHVRTIIFGSAGMEILMKMGITLASMTISTKYNPPIELIISAKYRNLSLLWPPRQQYEPVNKGTGRPHWIYLLGVYRNVSDSERDSYMNMIKSLGDSMDYHFLISRAHAQMLILAAEDRLVDEMHSFRNVIARLFVSLFAFIRNAFQSGYTSLNDIIEIEADLRLIVEGISSAAFRKDASTHFLISGTPIKDSKADLIKSLLSKVIRPISGHTRPLSAIQHLFLLRSAYALDIPRQNGSLSEQVSTVALSFIENIHSEAMRDILSWNTTTKHALYYAFASILQRPLTEWGASRNARRAILLASSMCTEEHVIATELAIQELYVKIRSNADPIHLLDVYTPCLSSLRLDLSEHHRIYAMADVVFYPDIQQYLKKKSHEGNMKEDDLETKAEYILTKLRSPLIRTLSAYASEVLSCSDQDLLEINAILILPVSGIGSYVVSRRAGMQGIVYTVDGVDVNNQLFITYTRMPCTTTIGNIVPTVLSRPSGKTCPYCGCVLLRYSADGNIRYSIYISSPKLQSELIAFGNSSIRRFNPTTAQIYGNSLLLYPNGTIVRILAFESERVTIISATYIATAVAGSIIALTVIVITVRMIIINMRYNYQGYNKVIDVDDDIRN</sequence>
<protein>
    <recommendedName>
        <fullName evidence="2">Envelope glycoprotein H</fullName>
        <shortName evidence="2">gH</shortName>
    </recommendedName>
</protein>
<gene>
    <name evidence="2" type="primary">gH</name>
</gene>
<accession>P36337</accession>
<feature type="signal peptide" evidence="1">
    <location>
        <begin position="1"/>
        <end position="17"/>
    </location>
</feature>
<feature type="chain" id="PRO_0000038246" description="Envelope glycoprotein H">
    <location>
        <begin position="18"/>
        <end position="808"/>
    </location>
</feature>
<feature type="topological domain" description="Virion surface" evidence="2">
    <location>
        <begin position="18"/>
        <end position="761"/>
    </location>
</feature>
<feature type="transmembrane region" description="Helical" evidence="2">
    <location>
        <begin position="762"/>
        <end position="782"/>
    </location>
</feature>
<feature type="topological domain" description="Intravirion" evidence="2">
    <location>
        <begin position="783"/>
        <end position="808"/>
    </location>
</feature>
<feature type="region of interest" description="Interaction with gL" evidence="2">
    <location>
        <begin position="205"/>
        <end position="266"/>
    </location>
</feature>
<feature type="glycosylation site" description="N-linked (GlcNAc...) asparagine; by host" evidence="2">
    <location>
        <position position="44"/>
    </location>
</feature>
<feature type="glycosylation site" description="N-linked (GlcNAc...) asparagine; by host" evidence="2">
    <location>
        <position position="60"/>
    </location>
</feature>
<feature type="glycosylation site" description="N-linked (GlcNAc...) asparagine; by host" evidence="2">
    <location>
        <position position="114"/>
    </location>
</feature>
<feature type="glycosylation site" description="N-linked (GlcNAc...) asparagine; by host" evidence="2">
    <location>
        <position position="240"/>
    </location>
</feature>
<feature type="glycosylation site" description="N-linked (GlcNAc...) asparagine; by host" evidence="2">
    <location>
        <position position="272"/>
    </location>
</feature>
<feature type="glycosylation site" description="N-linked (GlcNAc...) asparagine; by host" evidence="2">
    <location>
        <position position="431"/>
    </location>
</feature>
<feature type="glycosylation site" description="N-linked (GlcNAc...) asparagine; by host" evidence="2">
    <location>
        <position position="461"/>
    </location>
</feature>
<feature type="glycosylation site" description="N-linked (GlcNAc...) asparagine; by host" evidence="2">
    <location>
        <position position="719"/>
    </location>
</feature>
<feature type="glycosylation site" description="N-linked (GlcNAc...) asparagine; by host" evidence="2">
    <location>
        <position position="742"/>
    </location>
</feature>
<comment type="function">
    <text evidence="2">The heterodimer glycoprotein H-glycoprotein L is required for the fusion of viral and plasma membranes leading to virus entry into the host cell. Following initial binding to host receptor, membrane fusion is mediated by the fusion machinery composed of gB and the heterodimer gH/gL. May also be involved in the fusion between the virion envelope and the outer nuclear membrane during virion morphogenesis.</text>
</comment>
<comment type="subunit">
    <text evidence="2">Interacts with glycoprotein L (gL); this interaction is necessary for the correct processing and cell surface expression of gH. The heterodimer gH/gL seems to interact with gB trimers during fusion.</text>
</comment>
<comment type="subcellular location">
    <subcellularLocation>
        <location evidence="2">Virion membrane</location>
        <topology evidence="2">Single-pass type I membrane protein</topology>
    </subcellularLocation>
    <subcellularLocation>
        <location evidence="2">Host cell membrane</location>
        <topology evidence="2">Single-pass type I membrane protein</topology>
    </subcellularLocation>
    <subcellularLocation>
        <location evidence="2">Host endosome membrane</location>
        <topology evidence="2">Single-pass type I membrane protein</topology>
    </subcellularLocation>
    <text evidence="2">During virion morphogenesis, this protein probably accumulates in the endosomes and trans-Golgi where secondary envelopment occurs. It is probably transported to the cell surface from where it is endocytosed and directed to the trans-Golgi network (TGN).</text>
</comment>
<comment type="PTM">
    <text evidence="2">N-glycosylated, O-glycosylated, and sialylated.</text>
</comment>
<comment type="similarity">
    <text evidence="2">Belongs to the herpesviridae glycoprotein H family.</text>
</comment>